<accession>A3LMX9</accession>
<comment type="function">
    <text evidence="1">Required for the post-translational delivery of tail-anchored (TA) proteins to the endoplasmic reticulum. Together with GET2, acts as a membrane receptor for soluble GET3, which recognizes and selectively binds the transmembrane domain of TA proteins in the cytosol. The GET complex cooperates with the HDEL receptor ERD2 to mediate the ATP-dependent retrieval of resident ER proteins that contain a C-terminal H-D-E-L retention signal from the Golgi to the ER.</text>
</comment>
<comment type="subunit">
    <text evidence="1">Component of the Golgi to ER traffic (GET) complex, which is composed of GET1, GET2 and GET3. Within the complex, GET1 and GET2 form a heterotetramer which is stabilized by phosphatidylinositol binding and which binds to the GET3 homodimer.</text>
</comment>
<comment type="subcellular location">
    <subcellularLocation>
        <location evidence="1">Endoplasmic reticulum membrane</location>
        <topology evidence="1">Multi-pass membrane protein</topology>
    </subcellularLocation>
    <subcellularLocation>
        <location evidence="1">Golgi apparatus membrane</location>
        <topology evidence="1">Multi-pass membrane protein</topology>
    </subcellularLocation>
</comment>
<comment type="similarity">
    <text evidence="1">Belongs to the WRB/GET1 family.</text>
</comment>
<keyword id="KW-0175">Coiled coil</keyword>
<keyword id="KW-0256">Endoplasmic reticulum</keyword>
<keyword id="KW-0931">ER-Golgi transport</keyword>
<keyword id="KW-0333">Golgi apparatus</keyword>
<keyword id="KW-0472">Membrane</keyword>
<keyword id="KW-1185">Reference proteome</keyword>
<keyword id="KW-0812">Transmembrane</keyword>
<keyword id="KW-1133">Transmembrane helix</keyword>
<keyword id="KW-0813">Transport</keyword>
<feature type="chain" id="PRO_0000388611" description="Golgi to ER traffic protein 1">
    <location>
        <begin position="1"/>
        <end position="229"/>
    </location>
</feature>
<feature type="topological domain" description="Lumenal" evidence="1">
    <location>
        <begin position="1"/>
        <end position="14"/>
    </location>
</feature>
<feature type="transmembrane region" description="Helical" evidence="1">
    <location>
        <begin position="15"/>
        <end position="34"/>
    </location>
</feature>
<feature type="topological domain" description="Cytoplasmic" evidence="1">
    <location>
        <begin position="35"/>
        <end position="122"/>
    </location>
</feature>
<feature type="transmembrane region" description="Helical" evidence="1">
    <location>
        <begin position="123"/>
        <end position="143"/>
    </location>
</feature>
<feature type="topological domain" description="Lumenal" evidence="1">
    <location>
        <begin position="144"/>
        <end position="167"/>
    </location>
</feature>
<feature type="transmembrane region" description="Helical" evidence="1">
    <location>
        <begin position="168"/>
        <end position="184"/>
    </location>
</feature>
<feature type="topological domain" description="Cytoplasmic" evidence="1">
    <location>
        <begin position="185"/>
        <end position="229"/>
    </location>
</feature>
<feature type="region of interest" description="Disordered" evidence="2">
    <location>
        <begin position="210"/>
        <end position="229"/>
    </location>
</feature>
<feature type="coiled-coil region" evidence="1">
    <location>
        <begin position="60"/>
        <end position="117"/>
    </location>
</feature>
<feature type="compositionally biased region" description="Basic and acidic residues" evidence="2">
    <location>
        <begin position="210"/>
        <end position="219"/>
    </location>
</feature>
<organism>
    <name type="scientific">Scheffersomyces stipitis (strain ATCC 58785 / CBS 6054 / NBRC 10063 / NRRL Y-11545)</name>
    <name type="common">Yeast</name>
    <name type="synonym">Pichia stipitis</name>
    <dbReference type="NCBI Taxonomy" id="322104"/>
    <lineage>
        <taxon>Eukaryota</taxon>
        <taxon>Fungi</taxon>
        <taxon>Dikarya</taxon>
        <taxon>Ascomycota</taxon>
        <taxon>Saccharomycotina</taxon>
        <taxon>Pichiomycetes</taxon>
        <taxon>Debaryomycetaceae</taxon>
        <taxon>Scheffersomyces</taxon>
    </lineage>
</organism>
<dbReference type="EMBL" id="CP000496">
    <property type="protein sequence ID" value="ABN64763.2"/>
    <property type="molecule type" value="Genomic_DNA"/>
</dbReference>
<dbReference type="SMR" id="A3LMX9"/>
<dbReference type="FunCoup" id="A3LMX9">
    <property type="interactions" value="35"/>
</dbReference>
<dbReference type="STRING" id="322104.A3LMX9"/>
<dbReference type="KEGG" id="pic:PICST_29392"/>
<dbReference type="eggNOG" id="KOG4253">
    <property type="taxonomic scope" value="Eukaryota"/>
</dbReference>
<dbReference type="HOGENOM" id="CLU_089418_2_0_1"/>
<dbReference type="InParanoid" id="A3LMX9"/>
<dbReference type="OMA" id="AEWIISF"/>
<dbReference type="OrthoDB" id="69461at2759"/>
<dbReference type="Proteomes" id="UP000002258">
    <property type="component" value="Chromosome 2"/>
</dbReference>
<dbReference type="GO" id="GO:0005789">
    <property type="term" value="C:endoplasmic reticulum membrane"/>
    <property type="evidence" value="ECO:0007669"/>
    <property type="project" value="UniProtKB-SubCell"/>
</dbReference>
<dbReference type="GO" id="GO:0043529">
    <property type="term" value="C:GET complex"/>
    <property type="evidence" value="ECO:0007669"/>
    <property type="project" value="UniProtKB-UniRule"/>
</dbReference>
<dbReference type="GO" id="GO:0000139">
    <property type="term" value="C:Golgi membrane"/>
    <property type="evidence" value="ECO:0007669"/>
    <property type="project" value="UniProtKB-SubCell"/>
</dbReference>
<dbReference type="GO" id="GO:0043495">
    <property type="term" value="F:protein-membrane adaptor activity"/>
    <property type="evidence" value="ECO:0007669"/>
    <property type="project" value="TreeGrafter"/>
</dbReference>
<dbReference type="GO" id="GO:0071816">
    <property type="term" value="P:tail-anchored membrane protein insertion into ER membrane"/>
    <property type="evidence" value="ECO:0007669"/>
    <property type="project" value="InterPro"/>
</dbReference>
<dbReference type="GO" id="GO:0016192">
    <property type="term" value="P:vesicle-mediated transport"/>
    <property type="evidence" value="ECO:0007669"/>
    <property type="project" value="UniProtKB-KW"/>
</dbReference>
<dbReference type="Gene3D" id="1.10.287.660">
    <property type="entry name" value="Helix hairpin bin"/>
    <property type="match status" value="1"/>
</dbReference>
<dbReference type="HAMAP" id="MF_03113">
    <property type="entry name" value="Get1"/>
    <property type="match status" value="1"/>
</dbReference>
<dbReference type="InterPro" id="IPR028945">
    <property type="entry name" value="Get1"/>
</dbReference>
<dbReference type="InterPro" id="IPR027538">
    <property type="entry name" value="Get1_fungi"/>
</dbReference>
<dbReference type="InterPro" id="IPR029012">
    <property type="entry name" value="Helix_hairpin_bin_sf"/>
</dbReference>
<dbReference type="PANTHER" id="PTHR42650:SF1">
    <property type="entry name" value="GUIDED ENTRY OF TAIL-ANCHORED PROTEINS FACTOR 1"/>
    <property type="match status" value="1"/>
</dbReference>
<dbReference type="PANTHER" id="PTHR42650">
    <property type="entry name" value="TAIL-ANCHORED PROTEIN INSERTION RECEPTOR WRB"/>
    <property type="match status" value="1"/>
</dbReference>
<dbReference type="Pfam" id="PF04420">
    <property type="entry name" value="CHD5"/>
    <property type="match status" value="1"/>
</dbReference>
<gene>
    <name evidence="1" type="primary">GET1</name>
    <name type="ORF">PICST_29392</name>
</gene>
<proteinExistence type="inferred from homology"/>
<name>GET1_PICST</name>
<reference key="1">
    <citation type="journal article" date="2007" name="Nat. Biotechnol.">
        <title>Genome sequence of the lignocellulose-bioconverting and xylose-fermenting yeast Pichia stipitis.</title>
        <authorList>
            <person name="Jeffries T.W."/>
            <person name="Grigoriev I.V."/>
            <person name="Grimwood J."/>
            <person name="Laplaza J.M."/>
            <person name="Aerts A."/>
            <person name="Salamov A."/>
            <person name="Schmutz J."/>
            <person name="Lindquist E."/>
            <person name="Dehal P."/>
            <person name="Shapiro H."/>
            <person name="Jin Y.-S."/>
            <person name="Passoth V."/>
            <person name="Richardson P.M."/>
        </authorList>
    </citation>
    <scope>NUCLEOTIDE SEQUENCE [LARGE SCALE GENOMIC DNA]</scope>
    <source>
        <strain>ATCC 58785 / CBS 6054 / NBRC 10063 / NRRL Y-11545</strain>
    </source>
</reference>
<sequence length="229" mass="25785">MGILAALDLHPYTLVVSSFTVLLIQQLVGFIGKSTIQEFAWLFYLRVGGKLGLSNSFVAHTKKQEELHKLNREKRSISAQDEYAKWTKLNRQAEKLTAEVKSLSDDIAKDKSKINSLVGVVLLFLTTLPLWVFRLWFRKSVLFYLPTGVFPYYVERVLAIPFFASGSVGLTVWMFAVNNVISSVLFLLTFPFKPSVPIPIRQTKVEEVVPESAESKESSPEVIDIADAN</sequence>
<evidence type="ECO:0000255" key="1">
    <source>
        <dbReference type="HAMAP-Rule" id="MF_03113"/>
    </source>
</evidence>
<evidence type="ECO:0000256" key="2">
    <source>
        <dbReference type="SAM" id="MobiDB-lite"/>
    </source>
</evidence>
<protein>
    <recommendedName>
        <fullName evidence="1">Golgi to ER traffic protein 1</fullName>
    </recommendedName>
    <alternativeName>
        <fullName evidence="1">Guided entry of tail-anchored proteins 1</fullName>
    </alternativeName>
</protein>